<evidence type="ECO:0000255" key="1">
    <source>
        <dbReference type="HAMAP-Rule" id="MF_01456"/>
    </source>
</evidence>
<name>NUOK_VARPS</name>
<dbReference type="EC" id="7.1.1.-" evidence="1"/>
<dbReference type="EMBL" id="CP001635">
    <property type="protein sequence ID" value="ACS20117.1"/>
    <property type="molecule type" value="Genomic_DNA"/>
</dbReference>
<dbReference type="SMR" id="C5CT10"/>
<dbReference type="STRING" id="543728.Vapar_3500"/>
<dbReference type="KEGG" id="vap:Vapar_3500"/>
<dbReference type="eggNOG" id="COG0713">
    <property type="taxonomic scope" value="Bacteria"/>
</dbReference>
<dbReference type="HOGENOM" id="CLU_144724_2_0_4"/>
<dbReference type="OrthoDB" id="9801357at2"/>
<dbReference type="GO" id="GO:0030964">
    <property type="term" value="C:NADH dehydrogenase complex"/>
    <property type="evidence" value="ECO:0007669"/>
    <property type="project" value="TreeGrafter"/>
</dbReference>
<dbReference type="GO" id="GO:0005886">
    <property type="term" value="C:plasma membrane"/>
    <property type="evidence" value="ECO:0007669"/>
    <property type="project" value="UniProtKB-SubCell"/>
</dbReference>
<dbReference type="GO" id="GO:0050136">
    <property type="term" value="F:NADH:ubiquinone reductase (non-electrogenic) activity"/>
    <property type="evidence" value="ECO:0007669"/>
    <property type="project" value="UniProtKB-UniRule"/>
</dbReference>
<dbReference type="GO" id="GO:0048038">
    <property type="term" value="F:quinone binding"/>
    <property type="evidence" value="ECO:0007669"/>
    <property type="project" value="UniProtKB-KW"/>
</dbReference>
<dbReference type="GO" id="GO:0042773">
    <property type="term" value="P:ATP synthesis coupled electron transport"/>
    <property type="evidence" value="ECO:0007669"/>
    <property type="project" value="InterPro"/>
</dbReference>
<dbReference type="FunFam" id="1.10.287.3510:FF:000001">
    <property type="entry name" value="NADH-quinone oxidoreductase subunit K"/>
    <property type="match status" value="1"/>
</dbReference>
<dbReference type="Gene3D" id="1.10.287.3510">
    <property type="match status" value="1"/>
</dbReference>
<dbReference type="HAMAP" id="MF_01456">
    <property type="entry name" value="NDH1_NuoK"/>
    <property type="match status" value="1"/>
</dbReference>
<dbReference type="InterPro" id="IPR001133">
    <property type="entry name" value="NADH_UbQ_OxRdtase_chain4L/K"/>
</dbReference>
<dbReference type="InterPro" id="IPR039428">
    <property type="entry name" value="NUOK/Mnh_C1-like"/>
</dbReference>
<dbReference type="NCBIfam" id="NF004320">
    <property type="entry name" value="PRK05715.1-2"/>
    <property type="match status" value="1"/>
</dbReference>
<dbReference type="NCBIfam" id="NF004321">
    <property type="entry name" value="PRK05715.1-3"/>
    <property type="match status" value="1"/>
</dbReference>
<dbReference type="NCBIfam" id="NF004323">
    <property type="entry name" value="PRK05715.1-5"/>
    <property type="match status" value="1"/>
</dbReference>
<dbReference type="PANTHER" id="PTHR11434:SF21">
    <property type="entry name" value="NADH DEHYDROGENASE SUBUNIT 4L-RELATED"/>
    <property type="match status" value="1"/>
</dbReference>
<dbReference type="PANTHER" id="PTHR11434">
    <property type="entry name" value="NADH-UBIQUINONE OXIDOREDUCTASE SUBUNIT ND4L"/>
    <property type="match status" value="1"/>
</dbReference>
<dbReference type="Pfam" id="PF00420">
    <property type="entry name" value="Oxidored_q2"/>
    <property type="match status" value="1"/>
</dbReference>
<gene>
    <name evidence="1" type="primary">nuoK</name>
    <name type="ordered locus">Vapar_3500</name>
</gene>
<accession>C5CT10</accession>
<reference key="1">
    <citation type="journal article" date="2011" name="J. Bacteriol.">
        <title>Complete genome sequence of the metabolically versatile plant growth-promoting endophyte, Variovorax paradoxus S110.</title>
        <authorList>
            <person name="Han J.I."/>
            <person name="Choi H.K."/>
            <person name="Lee S.W."/>
            <person name="Orwin P.M."/>
            <person name="Kim J."/>
            <person name="Laroe S.L."/>
            <person name="Kim T.G."/>
            <person name="O'Neil J."/>
            <person name="Leadbetter J.R."/>
            <person name="Lee S.Y."/>
            <person name="Hur C.G."/>
            <person name="Spain J.C."/>
            <person name="Ovchinnikova G."/>
            <person name="Goodwin L."/>
            <person name="Han C."/>
        </authorList>
    </citation>
    <scope>NUCLEOTIDE SEQUENCE [LARGE SCALE GENOMIC DNA]</scope>
    <source>
        <strain>S110</strain>
    </source>
</reference>
<sequence length="102" mass="11210">MTLTLGHFLSLGAMLFALSVIGIFLNRKNLIVLLMAIELMLLAVNMNFVAFSYYLGDMHGQIFVFFILTVAAAESAIGLALLVLLFRNKSNINVDELNSLKG</sequence>
<feature type="chain" id="PRO_0000390269" description="NADH-quinone oxidoreductase subunit K">
    <location>
        <begin position="1"/>
        <end position="102"/>
    </location>
</feature>
<feature type="transmembrane region" description="Helical" evidence="1">
    <location>
        <begin position="5"/>
        <end position="25"/>
    </location>
</feature>
<feature type="transmembrane region" description="Helical" evidence="1">
    <location>
        <begin position="31"/>
        <end position="51"/>
    </location>
</feature>
<feature type="transmembrane region" description="Helical" evidence="1">
    <location>
        <begin position="62"/>
        <end position="82"/>
    </location>
</feature>
<proteinExistence type="inferred from homology"/>
<organism>
    <name type="scientific">Variovorax paradoxus (strain S110)</name>
    <dbReference type="NCBI Taxonomy" id="543728"/>
    <lineage>
        <taxon>Bacteria</taxon>
        <taxon>Pseudomonadati</taxon>
        <taxon>Pseudomonadota</taxon>
        <taxon>Betaproteobacteria</taxon>
        <taxon>Burkholderiales</taxon>
        <taxon>Comamonadaceae</taxon>
        <taxon>Variovorax</taxon>
    </lineage>
</organism>
<comment type="function">
    <text evidence="1">NDH-1 shuttles electrons from NADH, via FMN and iron-sulfur (Fe-S) centers, to quinones in the respiratory chain. The immediate electron acceptor for the enzyme in this species is believed to be ubiquinone. Couples the redox reaction to proton translocation (for every two electrons transferred, four hydrogen ions are translocated across the cytoplasmic membrane), and thus conserves the redox energy in a proton gradient.</text>
</comment>
<comment type="catalytic activity">
    <reaction evidence="1">
        <text>a quinone + NADH + 5 H(+)(in) = a quinol + NAD(+) + 4 H(+)(out)</text>
        <dbReference type="Rhea" id="RHEA:57888"/>
        <dbReference type="ChEBI" id="CHEBI:15378"/>
        <dbReference type="ChEBI" id="CHEBI:24646"/>
        <dbReference type="ChEBI" id="CHEBI:57540"/>
        <dbReference type="ChEBI" id="CHEBI:57945"/>
        <dbReference type="ChEBI" id="CHEBI:132124"/>
    </reaction>
</comment>
<comment type="subunit">
    <text evidence="1">NDH-1 is composed of 14 different subunits. Subunits NuoA, H, J, K, L, M, N constitute the membrane sector of the complex.</text>
</comment>
<comment type="subcellular location">
    <subcellularLocation>
        <location evidence="1">Cell inner membrane</location>
        <topology evidence="1">Multi-pass membrane protein</topology>
    </subcellularLocation>
</comment>
<comment type="similarity">
    <text evidence="1">Belongs to the complex I subunit 4L family.</text>
</comment>
<protein>
    <recommendedName>
        <fullName evidence="1">NADH-quinone oxidoreductase subunit K</fullName>
        <ecNumber evidence="1">7.1.1.-</ecNumber>
    </recommendedName>
    <alternativeName>
        <fullName evidence="1">NADH dehydrogenase I subunit K</fullName>
    </alternativeName>
    <alternativeName>
        <fullName evidence="1">NDH-1 subunit K</fullName>
    </alternativeName>
</protein>
<keyword id="KW-0997">Cell inner membrane</keyword>
<keyword id="KW-1003">Cell membrane</keyword>
<keyword id="KW-0472">Membrane</keyword>
<keyword id="KW-0520">NAD</keyword>
<keyword id="KW-0874">Quinone</keyword>
<keyword id="KW-1278">Translocase</keyword>
<keyword id="KW-0812">Transmembrane</keyword>
<keyword id="KW-1133">Transmembrane helix</keyword>
<keyword id="KW-0813">Transport</keyword>
<keyword id="KW-0830">Ubiquinone</keyword>